<evidence type="ECO:0000255" key="1">
    <source>
        <dbReference type="HAMAP-Rule" id="MF_01633"/>
    </source>
</evidence>
<feature type="chain" id="PRO_1000186635" description="7-cyano-7-deazaguanine synthase">
    <location>
        <begin position="1"/>
        <end position="231"/>
    </location>
</feature>
<feature type="binding site" evidence="1">
    <location>
        <begin position="8"/>
        <end position="18"/>
    </location>
    <ligand>
        <name>ATP</name>
        <dbReference type="ChEBI" id="CHEBI:30616"/>
    </ligand>
</feature>
<feature type="binding site" evidence="1">
    <location>
        <position position="188"/>
    </location>
    <ligand>
        <name>Zn(2+)</name>
        <dbReference type="ChEBI" id="CHEBI:29105"/>
    </ligand>
</feature>
<feature type="binding site" evidence="1">
    <location>
        <position position="197"/>
    </location>
    <ligand>
        <name>Zn(2+)</name>
        <dbReference type="ChEBI" id="CHEBI:29105"/>
    </ligand>
</feature>
<feature type="binding site" evidence="1">
    <location>
        <position position="200"/>
    </location>
    <ligand>
        <name>Zn(2+)</name>
        <dbReference type="ChEBI" id="CHEBI:29105"/>
    </ligand>
</feature>
<feature type="binding site" evidence="1">
    <location>
        <position position="203"/>
    </location>
    <ligand>
        <name>Zn(2+)</name>
        <dbReference type="ChEBI" id="CHEBI:29105"/>
    </ligand>
</feature>
<reference key="1">
    <citation type="journal article" date="2011" name="J. Bacteriol.">
        <title>Comparative genomics of 28 Salmonella enterica isolates: evidence for CRISPR-mediated adaptive sublineage evolution.</title>
        <authorList>
            <person name="Fricke W.F."/>
            <person name="Mammel M.K."/>
            <person name="McDermott P.F."/>
            <person name="Tartera C."/>
            <person name="White D.G."/>
            <person name="Leclerc J.E."/>
            <person name="Ravel J."/>
            <person name="Cebula T.A."/>
        </authorList>
    </citation>
    <scope>NUCLEOTIDE SEQUENCE [LARGE SCALE GENOMIC DNA]</scope>
    <source>
        <strain>CVM19633</strain>
    </source>
</reference>
<proteinExistence type="inferred from homology"/>
<name>QUEC_SALSV</name>
<dbReference type="EC" id="6.3.4.20" evidence="1"/>
<dbReference type="EMBL" id="CP001127">
    <property type="protein sequence ID" value="ACF89764.1"/>
    <property type="molecule type" value="Genomic_DNA"/>
</dbReference>
<dbReference type="RefSeq" id="WP_000817203.1">
    <property type="nucleotide sequence ID" value="NC_011094.1"/>
</dbReference>
<dbReference type="SMR" id="B4TMD3"/>
<dbReference type="KEGG" id="sew:SeSA_A0514"/>
<dbReference type="HOGENOM" id="CLU_081854_0_0_6"/>
<dbReference type="UniPathway" id="UPA00391"/>
<dbReference type="Proteomes" id="UP000001865">
    <property type="component" value="Chromosome"/>
</dbReference>
<dbReference type="GO" id="GO:0005524">
    <property type="term" value="F:ATP binding"/>
    <property type="evidence" value="ECO:0007669"/>
    <property type="project" value="UniProtKB-UniRule"/>
</dbReference>
<dbReference type="GO" id="GO:0016879">
    <property type="term" value="F:ligase activity, forming carbon-nitrogen bonds"/>
    <property type="evidence" value="ECO:0007669"/>
    <property type="project" value="UniProtKB-UniRule"/>
</dbReference>
<dbReference type="GO" id="GO:0008270">
    <property type="term" value="F:zinc ion binding"/>
    <property type="evidence" value="ECO:0007669"/>
    <property type="project" value="UniProtKB-UniRule"/>
</dbReference>
<dbReference type="GO" id="GO:0008616">
    <property type="term" value="P:queuosine biosynthetic process"/>
    <property type="evidence" value="ECO:0007669"/>
    <property type="project" value="UniProtKB-UniRule"/>
</dbReference>
<dbReference type="CDD" id="cd01995">
    <property type="entry name" value="QueC-like"/>
    <property type="match status" value="1"/>
</dbReference>
<dbReference type="FunFam" id="3.40.50.620:FF:000017">
    <property type="entry name" value="7-cyano-7-deazaguanine synthase"/>
    <property type="match status" value="1"/>
</dbReference>
<dbReference type="Gene3D" id="3.40.50.620">
    <property type="entry name" value="HUPs"/>
    <property type="match status" value="1"/>
</dbReference>
<dbReference type="HAMAP" id="MF_01633">
    <property type="entry name" value="QueC"/>
    <property type="match status" value="1"/>
</dbReference>
<dbReference type="InterPro" id="IPR018317">
    <property type="entry name" value="QueC"/>
</dbReference>
<dbReference type="InterPro" id="IPR014729">
    <property type="entry name" value="Rossmann-like_a/b/a_fold"/>
</dbReference>
<dbReference type="NCBIfam" id="TIGR00364">
    <property type="entry name" value="7-cyano-7-deazaguanine synthase QueC"/>
    <property type="match status" value="1"/>
</dbReference>
<dbReference type="NCBIfam" id="NF008317">
    <property type="entry name" value="PRK11106.1"/>
    <property type="match status" value="1"/>
</dbReference>
<dbReference type="PANTHER" id="PTHR42914">
    <property type="entry name" value="7-CYANO-7-DEAZAGUANINE SYNTHASE"/>
    <property type="match status" value="1"/>
</dbReference>
<dbReference type="PANTHER" id="PTHR42914:SF1">
    <property type="entry name" value="7-CYANO-7-DEAZAGUANINE SYNTHASE"/>
    <property type="match status" value="1"/>
</dbReference>
<dbReference type="Pfam" id="PF06508">
    <property type="entry name" value="QueC"/>
    <property type="match status" value="1"/>
</dbReference>
<dbReference type="PIRSF" id="PIRSF006293">
    <property type="entry name" value="ExsB"/>
    <property type="match status" value="1"/>
</dbReference>
<dbReference type="SUPFAM" id="SSF52402">
    <property type="entry name" value="Adenine nucleotide alpha hydrolases-like"/>
    <property type="match status" value="1"/>
</dbReference>
<organism>
    <name type="scientific">Salmonella schwarzengrund (strain CVM19633)</name>
    <dbReference type="NCBI Taxonomy" id="439843"/>
    <lineage>
        <taxon>Bacteria</taxon>
        <taxon>Pseudomonadati</taxon>
        <taxon>Pseudomonadota</taxon>
        <taxon>Gammaproteobacteria</taxon>
        <taxon>Enterobacterales</taxon>
        <taxon>Enterobacteriaceae</taxon>
        <taxon>Salmonella</taxon>
    </lineage>
</organism>
<sequence length="231" mass="25469">MKRAVVVFSGGQDSTTCLAQARHQYDEVHCVTFDYGQRHRAEIDVARALALKLGARAHKVLDVTLLNELAVSSLTRDSIPVPDYEPNADGIPNTFVPGRNILFLTLAAIYAYQVKAEAVITGVCETDFSGYPDCRDEFVKALNHAVNLGMAKDIRFETPLMWIDKAETWALADYWGQLELVREETLTCYNGIKGDGCGHCAACNLRANGLNHYLSNKAAVMAAMKQKTGLR</sequence>
<keyword id="KW-0067">ATP-binding</keyword>
<keyword id="KW-0436">Ligase</keyword>
<keyword id="KW-0479">Metal-binding</keyword>
<keyword id="KW-0547">Nucleotide-binding</keyword>
<keyword id="KW-0671">Queuosine biosynthesis</keyword>
<keyword id="KW-0862">Zinc</keyword>
<comment type="function">
    <text evidence="1">Catalyzes the ATP-dependent conversion of 7-carboxy-7-deazaguanine (CDG) to 7-cyano-7-deazaguanine (preQ(0)).</text>
</comment>
<comment type="catalytic activity">
    <reaction evidence="1">
        <text>7-carboxy-7-deazaguanine + NH4(+) + ATP = 7-cyano-7-deazaguanine + ADP + phosphate + H2O + H(+)</text>
        <dbReference type="Rhea" id="RHEA:27982"/>
        <dbReference type="ChEBI" id="CHEBI:15377"/>
        <dbReference type="ChEBI" id="CHEBI:15378"/>
        <dbReference type="ChEBI" id="CHEBI:28938"/>
        <dbReference type="ChEBI" id="CHEBI:30616"/>
        <dbReference type="ChEBI" id="CHEBI:43474"/>
        <dbReference type="ChEBI" id="CHEBI:45075"/>
        <dbReference type="ChEBI" id="CHEBI:61036"/>
        <dbReference type="ChEBI" id="CHEBI:456216"/>
        <dbReference type="EC" id="6.3.4.20"/>
    </reaction>
</comment>
<comment type="cofactor">
    <cofactor evidence="1">
        <name>Zn(2+)</name>
        <dbReference type="ChEBI" id="CHEBI:29105"/>
    </cofactor>
    <text evidence="1">Binds 1 zinc ion per subunit.</text>
</comment>
<comment type="pathway">
    <text evidence="1">Purine metabolism; 7-cyano-7-deazaguanine biosynthesis.</text>
</comment>
<comment type="similarity">
    <text evidence="1">Belongs to the QueC family.</text>
</comment>
<protein>
    <recommendedName>
        <fullName evidence="1">7-cyano-7-deazaguanine synthase</fullName>
        <ecNumber evidence="1">6.3.4.20</ecNumber>
    </recommendedName>
    <alternativeName>
        <fullName evidence="1">7-cyano-7-carbaguanine synthase</fullName>
    </alternativeName>
    <alternativeName>
        <fullName evidence="1">PreQ(0) synthase</fullName>
    </alternativeName>
    <alternativeName>
        <fullName evidence="1">Queuosine biosynthesis protein QueC</fullName>
    </alternativeName>
</protein>
<gene>
    <name evidence="1" type="primary">queC</name>
    <name type="ordered locus">SeSA_A0514</name>
</gene>
<accession>B4TMD3</accession>